<feature type="chain" id="PRO_0000193876" description="Probable phosphoketolase">
    <location>
        <begin position="1"/>
        <end position="793"/>
    </location>
</feature>
<accession>Q7NLX2</accession>
<protein>
    <recommendedName>
        <fullName evidence="1">Probable phosphoketolase</fullName>
        <ecNumber evidence="1">4.1.2.-</ecNumber>
    </recommendedName>
</protein>
<comment type="cofactor">
    <cofactor evidence="1">
        <name>thiamine diphosphate</name>
        <dbReference type="ChEBI" id="CHEBI:58937"/>
    </cofactor>
</comment>
<comment type="similarity">
    <text evidence="1">Belongs to the XFP family.</text>
</comment>
<reference key="1">
    <citation type="journal article" date="2003" name="DNA Res.">
        <title>Complete genome structure of Gloeobacter violaceus PCC 7421, a cyanobacterium that lacks thylakoids.</title>
        <authorList>
            <person name="Nakamura Y."/>
            <person name="Kaneko T."/>
            <person name="Sato S."/>
            <person name="Mimuro M."/>
            <person name="Miyashita H."/>
            <person name="Tsuchiya T."/>
            <person name="Sasamoto S."/>
            <person name="Watanabe A."/>
            <person name="Kawashima K."/>
            <person name="Kishida Y."/>
            <person name="Kiyokawa C."/>
            <person name="Kohara M."/>
            <person name="Matsumoto M."/>
            <person name="Matsuno A."/>
            <person name="Nakazaki N."/>
            <person name="Shimpo S."/>
            <person name="Takeuchi C."/>
            <person name="Yamada M."/>
            <person name="Tabata S."/>
        </authorList>
    </citation>
    <scope>NUCLEOTIDE SEQUENCE [LARGE SCALE GENOMIC DNA]</scope>
    <source>
        <strain>ATCC 29082 / PCC 7421</strain>
    </source>
</reference>
<gene>
    <name type="ordered locus">glr0997</name>
</gene>
<dbReference type="EC" id="4.1.2.-" evidence="1"/>
<dbReference type="EMBL" id="BA000045">
    <property type="protein sequence ID" value="BAC88938.1"/>
    <property type="molecule type" value="Genomic_DNA"/>
</dbReference>
<dbReference type="RefSeq" id="NP_923943.1">
    <property type="nucleotide sequence ID" value="NC_005125.1"/>
</dbReference>
<dbReference type="RefSeq" id="WP_011140999.1">
    <property type="nucleotide sequence ID" value="NC_005125.1"/>
</dbReference>
<dbReference type="SMR" id="Q7NLX2"/>
<dbReference type="STRING" id="251221.gene:10758475"/>
<dbReference type="EnsemblBacteria" id="BAC88938">
    <property type="protein sequence ID" value="BAC88938"/>
    <property type="gene ID" value="BAC88938"/>
</dbReference>
<dbReference type="KEGG" id="gvi:glr0997"/>
<dbReference type="PATRIC" id="fig|251221.4.peg.1019"/>
<dbReference type="eggNOG" id="COG3957">
    <property type="taxonomic scope" value="Bacteria"/>
</dbReference>
<dbReference type="HOGENOM" id="CLU_013954_2_0_3"/>
<dbReference type="InParanoid" id="Q7NLX2"/>
<dbReference type="OrthoDB" id="9768449at2"/>
<dbReference type="PhylomeDB" id="Q7NLX2"/>
<dbReference type="Proteomes" id="UP000000557">
    <property type="component" value="Chromosome"/>
</dbReference>
<dbReference type="GO" id="GO:0016832">
    <property type="term" value="F:aldehyde-lyase activity"/>
    <property type="evidence" value="ECO:0007669"/>
    <property type="project" value="UniProtKB-UniRule"/>
</dbReference>
<dbReference type="GO" id="GO:0005975">
    <property type="term" value="P:carbohydrate metabolic process"/>
    <property type="evidence" value="ECO:0007669"/>
    <property type="project" value="InterPro"/>
</dbReference>
<dbReference type="CDD" id="cd02011">
    <property type="entry name" value="TPP_PK"/>
    <property type="match status" value="1"/>
</dbReference>
<dbReference type="FunFam" id="3.40.50.970:FF:000011">
    <property type="entry name" value="Pyruvate dehydrogenase E1 component"/>
    <property type="match status" value="1"/>
</dbReference>
<dbReference type="FunFam" id="3.40.50.970:FF:000091">
    <property type="entry name" value="Xylulose-5-phosphate/fructose-6-phosphate phosphoketolase"/>
    <property type="match status" value="1"/>
</dbReference>
<dbReference type="Gene3D" id="3.40.50.920">
    <property type="match status" value="1"/>
</dbReference>
<dbReference type="Gene3D" id="3.40.50.970">
    <property type="match status" value="2"/>
</dbReference>
<dbReference type="HAMAP" id="MF_01403">
    <property type="entry name" value="Phosphoketolase"/>
    <property type="match status" value="1"/>
</dbReference>
<dbReference type="InterPro" id="IPR023962">
    <property type="entry name" value="Phosphoketolase"/>
</dbReference>
<dbReference type="InterPro" id="IPR029061">
    <property type="entry name" value="THDP-binding"/>
</dbReference>
<dbReference type="InterPro" id="IPR009014">
    <property type="entry name" value="Transketo_C/PFOR_II"/>
</dbReference>
<dbReference type="InterPro" id="IPR005593">
    <property type="entry name" value="Xul5P/Fru6P_PKetolase"/>
</dbReference>
<dbReference type="InterPro" id="IPR018969">
    <property type="entry name" value="Xul5P/Fru6P_PKetolase_C"/>
</dbReference>
<dbReference type="InterPro" id="IPR019790">
    <property type="entry name" value="Xul5P/Fru6P_PKetolase_CS"/>
</dbReference>
<dbReference type="InterPro" id="IPR018970">
    <property type="entry name" value="Xul5P/Fru6P_PKetolase_N"/>
</dbReference>
<dbReference type="InterPro" id="IPR019789">
    <property type="entry name" value="Xul5P/Fru6P_PKetolase_ThDP_BS"/>
</dbReference>
<dbReference type="NCBIfam" id="NF003616">
    <property type="entry name" value="PRK05261.1-1"/>
    <property type="match status" value="1"/>
</dbReference>
<dbReference type="NCBIfam" id="NF003617">
    <property type="entry name" value="PRK05261.1-2"/>
    <property type="match status" value="1"/>
</dbReference>
<dbReference type="NCBIfam" id="NF003619">
    <property type="entry name" value="PRK05261.1-4"/>
    <property type="match status" value="1"/>
</dbReference>
<dbReference type="NCBIfam" id="NF003621">
    <property type="entry name" value="PRK05261.1-6"/>
    <property type="match status" value="1"/>
</dbReference>
<dbReference type="PANTHER" id="PTHR31273">
    <property type="entry name" value="PHOSPHOKETOLASE-RELATED"/>
    <property type="match status" value="1"/>
</dbReference>
<dbReference type="PANTHER" id="PTHR31273:SF0">
    <property type="entry name" value="PHOSPHOKETOLASE-RELATED"/>
    <property type="match status" value="1"/>
</dbReference>
<dbReference type="Pfam" id="PF03894">
    <property type="entry name" value="XFP"/>
    <property type="match status" value="1"/>
</dbReference>
<dbReference type="Pfam" id="PF09363">
    <property type="entry name" value="XFP_C"/>
    <property type="match status" value="1"/>
</dbReference>
<dbReference type="Pfam" id="PF09364">
    <property type="entry name" value="XFP_N"/>
    <property type="match status" value="1"/>
</dbReference>
<dbReference type="PIRSF" id="PIRSF017245">
    <property type="entry name" value="Phosphoketolase"/>
    <property type="match status" value="1"/>
</dbReference>
<dbReference type="SUPFAM" id="SSF52518">
    <property type="entry name" value="Thiamin diphosphate-binding fold (THDP-binding)"/>
    <property type="match status" value="2"/>
</dbReference>
<dbReference type="PROSITE" id="PS60002">
    <property type="entry name" value="PHOSPHOKETOLASE_1"/>
    <property type="match status" value="1"/>
</dbReference>
<dbReference type="PROSITE" id="PS60003">
    <property type="entry name" value="PHOSPHOKETOLASE_2"/>
    <property type="match status" value="1"/>
</dbReference>
<proteinExistence type="inferred from homology"/>
<keyword id="KW-0456">Lyase</keyword>
<keyword id="KW-1185">Reference proteome</keyword>
<keyword id="KW-0786">Thiamine pyrophosphate</keyword>
<organism>
    <name type="scientific">Gloeobacter violaceus (strain ATCC 29082 / PCC 7421)</name>
    <dbReference type="NCBI Taxonomy" id="251221"/>
    <lineage>
        <taxon>Bacteria</taxon>
        <taxon>Bacillati</taxon>
        <taxon>Cyanobacteriota</taxon>
        <taxon>Cyanophyceae</taxon>
        <taxon>Gloeobacterales</taxon>
        <taxon>Gloeobacteraceae</taxon>
        <taxon>Gloeobacter</taxon>
    </lineage>
</organism>
<evidence type="ECO:0000255" key="1">
    <source>
        <dbReference type="HAMAP-Rule" id="MF_01403"/>
    </source>
</evidence>
<sequence length="793" mass="90195">MVVAKIEKTGTLSTEQLQKMHAYWRAANYLSVGQIYLMDNPLLREPLKLEHVKPRLLGHWGTTPGLNFIYVHLNRVIQDEDLDMIYIAGPGHGGPGLVANTYLEGTYSEYYPNISEDAEGMKRLFKQFSFPGGIPSHVAPETPGSIHEGGELGYAVSHAYGAVFDNPDLIVACVVGDGEAETGPLATSWHSNKFLNPVRDGAVLPILHLNGYKIANPTVLARISHEELEKLFEGYGYKPYFVEGSEYEPTHQLMAATLDTCIAEIKAIQHEARTGGATARPRWPMIVLRTPKGWTGPKEVDGKKTEDFWRSHQVPFSEMAGKPEHVQLLETWMRSYQPEELFDENGTFLGELKALAPKGHRRMGDNPHANGGILLKDLKMPDFRSYAVDVAKPGTTFAEATKVMGIFLRDVMKANLDQRNFRIVGPDETASNRWGPLFEITNRTWMDAIHPYDDHLSQDGRVMEILSEHTCQGWLEGYLLTGRHGFFSCYEAFIHLVDSMFNQHAKWLKTTRHIPWRRPIASLNYLLTSHVWRQDHNGFSHQDPGFIDHVVNKRAEVIRVYLPPDANTLLSVTDHCLRSRHYVNVVVAGKQPALQYLDMDAAIKHCTKGIGIWDWASNDQGVEPDVVMACCGDIPTLETLAAVDILRQNFPDLKIRVINVVNLMKLQPESEHPHGLSDKDFDSIFTPDKPVVFAFHGYPWLIHRLTYRRNNHNNIHVRGYKEEGTTTTPFDMVVMNDLDRFNLADDVIDRVPRLRYTAAHVKQMLHDKLIEHKQYIHEHGDDMPEIRDWCWPY</sequence>
<name>PHK_GLOVI</name>